<protein>
    <recommendedName>
        <fullName evidence="1">Arginine deiminase</fullName>
        <shortName evidence="1">ADI</shortName>
        <ecNumber evidence="1">3.5.3.6</ecNumber>
    </recommendedName>
    <alternativeName>
        <fullName evidence="1">Arginine dihydrolase</fullName>
        <shortName evidence="1">AD</shortName>
    </alternativeName>
</protein>
<proteinExistence type="inferred from homology"/>
<gene>
    <name evidence="1" type="primary">arcA</name>
    <name type="ordered locus">Mmwyl1_1975</name>
</gene>
<dbReference type="EC" id="3.5.3.6" evidence="1"/>
<dbReference type="EMBL" id="CP000749">
    <property type="protein sequence ID" value="ABR70899.1"/>
    <property type="molecule type" value="Genomic_DNA"/>
</dbReference>
<dbReference type="SMR" id="A6VWS0"/>
<dbReference type="STRING" id="400668.Mmwyl1_1975"/>
<dbReference type="KEGG" id="mmw:Mmwyl1_1975"/>
<dbReference type="eggNOG" id="COG2235">
    <property type="taxonomic scope" value="Bacteria"/>
</dbReference>
<dbReference type="HOGENOM" id="CLU_052662_0_0_6"/>
<dbReference type="OrthoDB" id="9807502at2"/>
<dbReference type="UniPathway" id="UPA00254">
    <property type="reaction ID" value="UER00364"/>
</dbReference>
<dbReference type="GO" id="GO:0005737">
    <property type="term" value="C:cytoplasm"/>
    <property type="evidence" value="ECO:0007669"/>
    <property type="project" value="UniProtKB-SubCell"/>
</dbReference>
<dbReference type="GO" id="GO:0016990">
    <property type="term" value="F:arginine deiminase activity"/>
    <property type="evidence" value="ECO:0007669"/>
    <property type="project" value="UniProtKB-UniRule"/>
</dbReference>
<dbReference type="GO" id="GO:0019547">
    <property type="term" value="P:arginine catabolic process to ornithine"/>
    <property type="evidence" value="ECO:0007669"/>
    <property type="project" value="UniProtKB-UniRule"/>
</dbReference>
<dbReference type="GO" id="GO:0019546">
    <property type="term" value="P:arginine deiminase pathway"/>
    <property type="evidence" value="ECO:0007669"/>
    <property type="project" value="TreeGrafter"/>
</dbReference>
<dbReference type="Gene3D" id="1.10.3930.10">
    <property type="entry name" value="Arginine deiminase"/>
    <property type="match status" value="1"/>
</dbReference>
<dbReference type="Gene3D" id="3.75.10.10">
    <property type="entry name" value="L-arginine/glycine Amidinotransferase, Chain A"/>
    <property type="match status" value="1"/>
</dbReference>
<dbReference type="HAMAP" id="MF_00242">
    <property type="entry name" value="Arg_deiminase"/>
    <property type="match status" value="1"/>
</dbReference>
<dbReference type="InterPro" id="IPR003876">
    <property type="entry name" value="Arg_deiminase"/>
</dbReference>
<dbReference type="NCBIfam" id="NF002381">
    <property type="entry name" value="PRK01388.1"/>
    <property type="match status" value="1"/>
</dbReference>
<dbReference type="PANTHER" id="PTHR47271">
    <property type="entry name" value="ARGININE DEIMINASE"/>
    <property type="match status" value="1"/>
</dbReference>
<dbReference type="PANTHER" id="PTHR47271:SF3">
    <property type="entry name" value="ARGININE DEIMINASE"/>
    <property type="match status" value="1"/>
</dbReference>
<dbReference type="Pfam" id="PF02274">
    <property type="entry name" value="ADI"/>
    <property type="match status" value="1"/>
</dbReference>
<dbReference type="PIRSF" id="PIRSF006356">
    <property type="entry name" value="Arg_deiminase"/>
    <property type="match status" value="1"/>
</dbReference>
<dbReference type="PRINTS" id="PR01466">
    <property type="entry name" value="ARGDEIMINASE"/>
</dbReference>
<dbReference type="SUPFAM" id="SSF55909">
    <property type="entry name" value="Pentein"/>
    <property type="match status" value="1"/>
</dbReference>
<name>ARCA_MARMS</name>
<sequence>MIEFGVHSEVGKLRKVIVCRPGLAHSRLTPGNAAQLLYDDVLWVQQARTDHMDFCMKMESRGIKVLEFGQLLEETVRDKGARNWILDRRINENQVGVGMLNELRSWLDDMSAEQLAIYLIGGISVHELPFKPHGMFGNYLGGDGFVIPPLPNTQFPRDNSSWIYNGVTVNPMFWPARRPETLLVTAVYRFHPEFAPAFNNGDFKIWWGDPDLDHGPATAEGGDVMAWGNGSVLIGMGERTSPQAVGQIAKRLFEQGAATRVIACQMPRSRSAMHLDTVFSHCDRDVVTAFTDVCDEIQCYTLRPGDHAGQIDFRKEKKHLFQLAADCLGIKKLNVVQTGGDHYQKEREQWDDGNNVIALEPGVVVAYDRNTYTNTLLRKAGVEVITVSGAELGRGRGGGHCMTCPVWRDPVSY</sequence>
<feature type="chain" id="PRO_1000078365" description="Arginine deiminase">
    <location>
        <begin position="1"/>
        <end position="413"/>
    </location>
</feature>
<feature type="active site" description="Amidino-cysteine intermediate" evidence="1">
    <location>
        <position position="401"/>
    </location>
</feature>
<organism>
    <name type="scientific">Marinomonas sp. (strain MWYL1)</name>
    <dbReference type="NCBI Taxonomy" id="400668"/>
    <lineage>
        <taxon>Bacteria</taxon>
        <taxon>Pseudomonadati</taxon>
        <taxon>Pseudomonadota</taxon>
        <taxon>Gammaproteobacteria</taxon>
        <taxon>Oceanospirillales</taxon>
        <taxon>Oceanospirillaceae</taxon>
        <taxon>Marinomonas</taxon>
    </lineage>
</organism>
<accession>A6VWS0</accession>
<keyword id="KW-0056">Arginine metabolism</keyword>
<keyword id="KW-0963">Cytoplasm</keyword>
<keyword id="KW-0378">Hydrolase</keyword>
<reference key="1">
    <citation type="submission" date="2007-06" db="EMBL/GenBank/DDBJ databases">
        <title>Complete sequence of Marinomonas sp. MWYL1.</title>
        <authorList>
            <consortium name="US DOE Joint Genome Institute"/>
            <person name="Copeland A."/>
            <person name="Lucas S."/>
            <person name="Lapidus A."/>
            <person name="Barry K."/>
            <person name="Glavina del Rio T."/>
            <person name="Dalin E."/>
            <person name="Tice H."/>
            <person name="Pitluck S."/>
            <person name="Kiss H."/>
            <person name="Brettin T."/>
            <person name="Bruce D."/>
            <person name="Detter J.C."/>
            <person name="Han C."/>
            <person name="Schmutz J."/>
            <person name="Larimer F."/>
            <person name="Land M."/>
            <person name="Hauser L."/>
            <person name="Kyrpides N."/>
            <person name="Kim E."/>
            <person name="Johnston A.W.B."/>
            <person name="Todd J.D."/>
            <person name="Rogers R."/>
            <person name="Wexler M."/>
            <person name="Bond P.L."/>
            <person name="Li Y."/>
            <person name="Richardson P."/>
        </authorList>
    </citation>
    <scope>NUCLEOTIDE SEQUENCE [LARGE SCALE GENOMIC DNA]</scope>
    <source>
        <strain>MWYL1</strain>
    </source>
</reference>
<comment type="catalytic activity">
    <reaction evidence="1">
        <text>L-arginine + H2O = L-citrulline + NH4(+)</text>
        <dbReference type="Rhea" id="RHEA:19597"/>
        <dbReference type="ChEBI" id="CHEBI:15377"/>
        <dbReference type="ChEBI" id="CHEBI:28938"/>
        <dbReference type="ChEBI" id="CHEBI:32682"/>
        <dbReference type="ChEBI" id="CHEBI:57743"/>
        <dbReference type="EC" id="3.5.3.6"/>
    </reaction>
</comment>
<comment type="pathway">
    <text evidence="1">Amino-acid degradation; L-arginine degradation via ADI pathway; carbamoyl phosphate from L-arginine: step 1/2.</text>
</comment>
<comment type="subcellular location">
    <subcellularLocation>
        <location evidence="1">Cytoplasm</location>
    </subcellularLocation>
</comment>
<comment type="similarity">
    <text evidence="1">Belongs to the arginine deiminase family.</text>
</comment>
<evidence type="ECO:0000255" key="1">
    <source>
        <dbReference type="HAMAP-Rule" id="MF_00242"/>
    </source>
</evidence>